<dbReference type="EC" id="3.4.-.-" evidence="1"/>
<dbReference type="EMBL" id="AE017262">
    <property type="protein sequence ID" value="AAT02845.1"/>
    <property type="molecule type" value="Genomic_DNA"/>
</dbReference>
<dbReference type="RefSeq" id="WP_003727551.1">
    <property type="nucleotide sequence ID" value="NC_002973.6"/>
</dbReference>
<dbReference type="KEGG" id="lmf:LMOf2365_0057"/>
<dbReference type="HOGENOM" id="CLU_098969_2_2_9"/>
<dbReference type="GO" id="GO:0005886">
    <property type="term" value="C:plasma membrane"/>
    <property type="evidence" value="ECO:0007669"/>
    <property type="project" value="UniProtKB-SubCell"/>
</dbReference>
<dbReference type="GO" id="GO:0008233">
    <property type="term" value="F:peptidase activity"/>
    <property type="evidence" value="ECO:0007669"/>
    <property type="project" value="UniProtKB-UniRule"/>
</dbReference>
<dbReference type="GO" id="GO:0006508">
    <property type="term" value="P:proteolysis"/>
    <property type="evidence" value="ECO:0007669"/>
    <property type="project" value="UniProtKB-KW"/>
</dbReference>
<dbReference type="GO" id="GO:0009372">
    <property type="term" value="P:quorum sensing"/>
    <property type="evidence" value="ECO:0007669"/>
    <property type="project" value="UniProtKB-UniRule"/>
</dbReference>
<dbReference type="HAMAP" id="MF_00784">
    <property type="entry name" value="AgrB"/>
    <property type="match status" value="1"/>
</dbReference>
<dbReference type="InterPro" id="IPR006741">
    <property type="entry name" value="AgrB"/>
</dbReference>
<dbReference type="NCBIfam" id="NF002210">
    <property type="entry name" value="PRK01100.1"/>
    <property type="match status" value="1"/>
</dbReference>
<dbReference type="Pfam" id="PF04647">
    <property type="entry name" value="AgrB"/>
    <property type="match status" value="1"/>
</dbReference>
<dbReference type="SMART" id="SM00793">
    <property type="entry name" value="AgrB"/>
    <property type="match status" value="1"/>
</dbReference>
<comment type="function">
    <text evidence="1">May be involved in the proteolytic processing of a quorum sensing system signal molecule precursor.</text>
</comment>
<comment type="subcellular location">
    <subcellularLocation>
        <location evidence="1">Cell membrane</location>
        <topology evidence="1">Multi-pass membrane protein</topology>
    </subcellularLocation>
</comment>
<comment type="similarity">
    <text evidence="1">Belongs to the AgrB family.</text>
</comment>
<proteinExistence type="inferred from homology"/>
<sequence length="204" mass="23420">MSNFTAKVPLSERMADVLISKDRWKDDEEGYLKVKYGLEIILINVMKFALVYGIALVTGLLLQTVTVHLSYLWLRRYSFGLHATKTLNCTLISLMMFVLAPFVFQNIPSNNWIVLGTFGFILLNMFLFAPADTESLPLIGEEHRKTLKRKAMIGTLILTGIALLIPFAEMKTLIMVGSLFQVISINPLTYKLLKRRYRNYEKYE</sequence>
<feature type="chain" id="PRO_0000168141" description="Putative AgrB-like protein">
    <location>
        <begin position="1"/>
        <end position="204"/>
    </location>
</feature>
<feature type="transmembrane region" description="Helical" evidence="1">
    <location>
        <begin position="52"/>
        <end position="74"/>
    </location>
</feature>
<feature type="transmembrane region" description="Helical" evidence="1">
    <location>
        <begin position="87"/>
        <end position="107"/>
    </location>
</feature>
<feature type="transmembrane region" description="Helical" evidence="1">
    <location>
        <begin position="111"/>
        <end position="131"/>
    </location>
</feature>
<feature type="transmembrane region" description="Helical" evidence="1">
    <location>
        <begin position="151"/>
        <end position="168"/>
    </location>
</feature>
<feature type="transmembrane region" description="Helical" evidence="1">
    <location>
        <begin position="173"/>
        <end position="190"/>
    </location>
</feature>
<accession>Q725B6</accession>
<reference key="1">
    <citation type="journal article" date="2004" name="Nucleic Acids Res.">
        <title>Whole genome comparisons of serotype 4b and 1/2a strains of the food-borne pathogen Listeria monocytogenes reveal new insights into the core genome components of this species.</title>
        <authorList>
            <person name="Nelson K.E."/>
            <person name="Fouts D.E."/>
            <person name="Mongodin E.F."/>
            <person name="Ravel J."/>
            <person name="DeBoy R.T."/>
            <person name="Kolonay J.F."/>
            <person name="Rasko D.A."/>
            <person name="Angiuoli S.V."/>
            <person name="Gill S.R."/>
            <person name="Paulsen I.T."/>
            <person name="Peterson J.D."/>
            <person name="White O."/>
            <person name="Nelson W.C."/>
            <person name="Nierman W.C."/>
            <person name="Beanan M.J."/>
            <person name="Brinkac L.M."/>
            <person name="Daugherty S.C."/>
            <person name="Dodson R.J."/>
            <person name="Durkin A.S."/>
            <person name="Madupu R."/>
            <person name="Haft D.H."/>
            <person name="Selengut J."/>
            <person name="Van Aken S.E."/>
            <person name="Khouri H.M."/>
            <person name="Fedorova N."/>
            <person name="Forberger H.A."/>
            <person name="Tran B."/>
            <person name="Kathariou S."/>
            <person name="Wonderling L.D."/>
            <person name="Uhlich G.A."/>
            <person name="Bayles D.O."/>
            <person name="Luchansky J.B."/>
            <person name="Fraser C.M."/>
        </authorList>
    </citation>
    <scope>NUCLEOTIDE SEQUENCE [LARGE SCALE GENOMIC DNA]</scope>
    <source>
        <strain>F2365</strain>
    </source>
</reference>
<gene>
    <name type="ordered locus">LMOf2365_0057</name>
</gene>
<keyword id="KW-1003">Cell membrane</keyword>
<keyword id="KW-0378">Hydrolase</keyword>
<keyword id="KW-0472">Membrane</keyword>
<keyword id="KW-0645">Protease</keyword>
<keyword id="KW-0673">Quorum sensing</keyword>
<keyword id="KW-0812">Transmembrane</keyword>
<keyword id="KW-1133">Transmembrane helix</keyword>
<name>AGRB_LISMF</name>
<organism>
    <name type="scientific">Listeria monocytogenes serotype 4b (strain F2365)</name>
    <dbReference type="NCBI Taxonomy" id="265669"/>
    <lineage>
        <taxon>Bacteria</taxon>
        <taxon>Bacillati</taxon>
        <taxon>Bacillota</taxon>
        <taxon>Bacilli</taxon>
        <taxon>Bacillales</taxon>
        <taxon>Listeriaceae</taxon>
        <taxon>Listeria</taxon>
    </lineage>
</organism>
<protein>
    <recommendedName>
        <fullName evidence="1">Putative AgrB-like protein</fullName>
        <ecNumber evidence="1">3.4.-.-</ecNumber>
    </recommendedName>
</protein>
<evidence type="ECO:0000255" key="1">
    <source>
        <dbReference type="HAMAP-Rule" id="MF_00784"/>
    </source>
</evidence>